<protein>
    <recommendedName>
        <fullName>Antigenic protein P1</fullName>
    </recommendedName>
    <alternativeName>
        <fullName>Pathogenic protein 1</fullName>
    </alternativeName>
</protein>
<gene>
    <name evidence="6" type="ORF">EHI_015380</name>
</gene>
<proteinExistence type="evidence at transcript level"/>
<comment type="subcellular location">
    <subcellularLocation>
        <location evidence="1">Membrane</location>
        <topology evidence="1">Single-pass membrane protein</topology>
    </subcellularLocation>
</comment>
<reference evidence="6" key="1">
    <citation type="journal article" date="2005" name="Nature">
        <title>The genome of the protist parasite Entamoeba histolytica.</title>
        <authorList>
            <person name="Loftus B.J."/>
            <person name="Anderson I."/>
            <person name="Davies R."/>
            <person name="Alsmark U.C."/>
            <person name="Samuelson J."/>
            <person name="Amedeo P."/>
            <person name="Roncaglia P."/>
            <person name="Berriman M."/>
            <person name="Hirt R.P."/>
            <person name="Mann B.J."/>
            <person name="Nozaki T."/>
            <person name="Suh B."/>
            <person name="Pop M."/>
            <person name="Duchene M."/>
            <person name="Ackers J."/>
            <person name="Tannich E."/>
            <person name="Leippe M."/>
            <person name="Hofer M."/>
            <person name="Bruchhaus I."/>
            <person name="Willhoeft U."/>
            <person name="Bhattacharya A."/>
            <person name="Chillingworth T."/>
            <person name="Churcher C.M."/>
            <person name="Hance Z."/>
            <person name="Harris B."/>
            <person name="Harris D."/>
            <person name="Jagels K."/>
            <person name="Moule S."/>
            <person name="Mungall K.L."/>
            <person name="Ormond D."/>
            <person name="Squares R."/>
            <person name="Whitehead S."/>
            <person name="Quail M.A."/>
            <person name="Rabbinowitsch E."/>
            <person name="Norbertczak H."/>
            <person name="Price C."/>
            <person name="Wang Z."/>
            <person name="Guillen N."/>
            <person name="Gilchrist C."/>
            <person name="Stroup S.E."/>
            <person name="Bhattacharya S."/>
            <person name="Lohia A."/>
            <person name="Foster P.G."/>
            <person name="Sicheritz-Ponten T."/>
            <person name="Weber C."/>
            <person name="Singh U."/>
            <person name="Mukherjee C."/>
            <person name="El-Sayed N.M.A."/>
            <person name="Petri W.A."/>
            <person name="Clark C.G."/>
            <person name="Embley T.M."/>
            <person name="Barrell B.G."/>
            <person name="Fraser C.M."/>
            <person name="Hall N."/>
        </authorList>
    </citation>
    <scope>NUCLEOTIDE SEQUENCE [LARGE SCALE GENOMIC DNA]</scope>
    <source>
        <strain evidence="6">ATCC 30459 / HM-1:IMSS / ABRM</strain>
    </source>
</reference>
<reference key="2">
    <citation type="journal article" date="1989" name="Proc. Natl. Acad. Sci. U.S.A.">
        <title>Genomic DNA differences between pathogenic and nonpathogenic Entamoeba histolytica.</title>
        <authorList>
            <person name="Tannich E."/>
            <person name="Horstmann R.D."/>
            <person name="Knobloch J."/>
            <person name="Arnold H.H."/>
        </authorList>
    </citation>
    <scope>NUCLEOTIDE SEQUENCE [MRNA] OF 187-825</scope>
    <source>
        <strain>ATCC 30459 / HM-1:IMSS / ABRM</strain>
    </source>
</reference>
<name>APRP_ENTH1</name>
<keyword id="KW-0325">Glycoprotein</keyword>
<keyword id="KW-0472">Membrane</keyword>
<keyword id="KW-1185">Reference proteome</keyword>
<keyword id="KW-0812">Transmembrane</keyword>
<keyword id="KW-1133">Transmembrane helix</keyword>
<accession>P20302</accession>
<accession>A0A175JM75</accession>
<accession>C4M0X6</accession>
<feature type="chain" id="PRO_0000064643" description="Antigenic protein P1">
    <location>
        <begin position="1"/>
        <end position="1113"/>
    </location>
</feature>
<feature type="transmembrane region" description="Helical" evidence="1">
    <location>
        <begin position="7"/>
        <end position="27"/>
    </location>
</feature>
<feature type="domain" description="Peptidase M60" evidence="3">
    <location>
        <begin position="159"/>
        <end position="473"/>
    </location>
</feature>
<feature type="domain" description="PA14" evidence="4">
    <location>
        <begin position="648"/>
        <end position="800"/>
    </location>
</feature>
<feature type="glycosylation site" description="N-linked (GlcNAc...) asparagine" evidence="2">
    <location>
        <position position="121"/>
    </location>
</feature>
<feature type="glycosylation site" description="N-linked (GlcNAc...) asparagine" evidence="2">
    <location>
        <position position="207"/>
    </location>
</feature>
<feature type="glycosylation site" description="N-linked (GlcNAc...) asparagine" evidence="2">
    <location>
        <position position="225"/>
    </location>
</feature>
<feature type="glycosylation site" description="N-linked (GlcNAc...) asparagine" evidence="2">
    <location>
        <position position="233"/>
    </location>
</feature>
<feature type="glycosylation site" description="N-linked (GlcNAc...) asparagine" evidence="2">
    <location>
        <position position="274"/>
    </location>
</feature>
<feature type="glycosylation site" description="N-linked (GlcNAc...) asparagine" evidence="2">
    <location>
        <position position="533"/>
    </location>
</feature>
<feature type="glycosylation site" description="N-linked (GlcNAc...) asparagine" evidence="2">
    <location>
        <position position="576"/>
    </location>
</feature>
<feature type="glycosylation site" description="N-linked (GlcNAc...) asparagine" evidence="2">
    <location>
        <position position="622"/>
    </location>
</feature>
<feature type="glycosylation site" description="N-linked (GlcNAc...) asparagine" evidence="2">
    <location>
        <position position="675"/>
    </location>
</feature>
<feature type="glycosylation site" description="N-linked (GlcNAc...) asparagine" evidence="2">
    <location>
        <position position="679"/>
    </location>
</feature>
<feature type="glycosylation site" description="N-linked (GlcNAc...) asparagine" evidence="2">
    <location>
        <position position="730"/>
    </location>
</feature>
<feature type="glycosylation site" description="N-linked (GlcNAc...) asparagine" evidence="2">
    <location>
        <position position="753"/>
    </location>
</feature>
<feature type="glycosylation site" description="N-linked (GlcNAc...) asparagine" evidence="2">
    <location>
        <position position="880"/>
    </location>
</feature>
<feature type="glycosylation site" description="N-linked (GlcNAc...) asparagine" evidence="2">
    <location>
        <position position="899"/>
    </location>
</feature>
<feature type="glycosylation site" description="N-linked (GlcNAc...) asparagine" evidence="2">
    <location>
        <position position="907"/>
    </location>
</feature>
<feature type="glycosylation site" description="N-linked (GlcNAc...) asparagine" evidence="2">
    <location>
        <position position="972"/>
    </location>
</feature>
<feature type="glycosylation site" description="N-linked (GlcNAc...) asparagine" evidence="2">
    <location>
        <position position="995"/>
    </location>
</feature>
<feature type="sequence conflict" description="In Ref. 2." evidence="5" ref="2">
    <original>G</original>
    <variation>D</variation>
    <location>
        <position position="358"/>
    </location>
</feature>
<feature type="sequence conflict" description="In Ref. 2." evidence="5" ref="2">
    <original>T</original>
    <variation>P</variation>
    <location>
        <position position="397"/>
    </location>
</feature>
<feature type="sequence conflict" description="In Ref. 2." evidence="5" ref="2">
    <original>TA</original>
    <variation>CS</variation>
    <location>
        <begin position="581"/>
        <end position="582"/>
    </location>
</feature>
<feature type="sequence conflict" description="In Ref. 2." evidence="5" ref="2">
    <original>G</original>
    <variation>D</variation>
    <location>
        <position position="688"/>
    </location>
</feature>
<organism>
    <name type="scientific">Entamoeba histolytica (strain ATCC 30459 / HM-1:IMSS / ABRM)</name>
    <dbReference type="NCBI Taxonomy" id="294381"/>
    <lineage>
        <taxon>Eukaryota</taxon>
        <taxon>Amoebozoa</taxon>
        <taxon>Evosea</taxon>
        <taxon>Archamoebae</taxon>
        <taxon>Mastigamoebida</taxon>
        <taxon>Entamoebidae</taxon>
        <taxon>Entamoeba</taxon>
    </lineage>
</organism>
<dbReference type="EMBL" id="DS571202">
    <property type="protein sequence ID" value="EAL49122.1"/>
    <property type="molecule type" value="Genomic_DNA"/>
</dbReference>
<dbReference type="PIR" id="A32935">
    <property type="entry name" value="A32935"/>
</dbReference>
<dbReference type="RefSeq" id="XP_654508.1">
    <property type="nucleotide sequence ID" value="XM_649416.1"/>
</dbReference>
<dbReference type="SMR" id="P20302"/>
<dbReference type="STRING" id="5759.C4M0X6"/>
<dbReference type="EnsemblProtists" id="GAT94830">
    <property type="protein sequence ID" value="GAT94830"/>
    <property type="gene ID" value="CL6EHI_015380"/>
</dbReference>
<dbReference type="EnsemblProtists" id="rna_EHI_015380-1">
    <property type="protein sequence ID" value="rna_EHI_015380-1"/>
    <property type="gene ID" value="EHI_015380"/>
</dbReference>
<dbReference type="GeneID" id="3408814"/>
<dbReference type="KEGG" id="ehi:EHI_015380"/>
<dbReference type="VEuPathDB" id="AmoebaDB:EHI5A_021930"/>
<dbReference type="VEuPathDB" id="AmoebaDB:EHI7A_061750"/>
<dbReference type="VEuPathDB" id="AmoebaDB:EHI8A_065260"/>
<dbReference type="VEuPathDB" id="AmoebaDB:EHI_015380"/>
<dbReference type="VEuPathDB" id="AmoebaDB:KM1_119400"/>
<dbReference type="eggNOG" id="ENOG502RF7K">
    <property type="taxonomic scope" value="Eukaryota"/>
</dbReference>
<dbReference type="HOGENOM" id="CLU_281506_0_0_1"/>
<dbReference type="OMA" id="QVSIGKC"/>
<dbReference type="OrthoDB" id="26611at2759"/>
<dbReference type="Proteomes" id="UP000001926">
    <property type="component" value="Partially assembled WGS sequence"/>
</dbReference>
<dbReference type="GO" id="GO:0005886">
    <property type="term" value="C:plasma membrane"/>
    <property type="evidence" value="ECO:0000318"/>
    <property type="project" value="GO_Central"/>
</dbReference>
<dbReference type="GO" id="GO:0044325">
    <property type="term" value="F:transmembrane transporter binding"/>
    <property type="evidence" value="ECO:0000318"/>
    <property type="project" value="GO_Central"/>
</dbReference>
<dbReference type="Gene3D" id="2.60.120.260">
    <property type="entry name" value="Galactose-binding domain-like"/>
    <property type="match status" value="1"/>
</dbReference>
<dbReference type="Gene3D" id="3.40.390.80">
    <property type="entry name" value="Peptidase M60, enhancin-like domain 2"/>
    <property type="match status" value="1"/>
</dbReference>
<dbReference type="InterPro" id="IPR008979">
    <property type="entry name" value="Galactose-bd-like_sf"/>
</dbReference>
<dbReference type="InterPro" id="IPR037524">
    <property type="entry name" value="PA14/GLEYA"/>
</dbReference>
<dbReference type="InterPro" id="IPR031161">
    <property type="entry name" value="Peptidase_M60_dom"/>
</dbReference>
<dbReference type="InterPro" id="IPR051244">
    <property type="entry name" value="TCAF"/>
</dbReference>
<dbReference type="PANTHER" id="PTHR15730">
    <property type="entry name" value="EXPERIMENTAL AUTOIMMUNE PROSTATITIS ANTIGEN 2-RELATED"/>
    <property type="match status" value="1"/>
</dbReference>
<dbReference type="PANTHER" id="PTHR15730:SF5">
    <property type="entry name" value="SI:CH211-210B2.2-RELATED"/>
    <property type="match status" value="1"/>
</dbReference>
<dbReference type="Pfam" id="PF13402">
    <property type="entry name" value="Peptidase_M60"/>
    <property type="match status" value="1"/>
</dbReference>
<dbReference type="SMART" id="SM01276">
    <property type="entry name" value="M60-like"/>
    <property type="match status" value="1"/>
</dbReference>
<dbReference type="SUPFAM" id="SSF49785">
    <property type="entry name" value="Galactose-binding domain-like"/>
    <property type="match status" value="1"/>
</dbReference>
<dbReference type="PROSITE" id="PS51820">
    <property type="entry name" value="PA14"/>
    <property type="match status" value="1"/>
</dbReference>
<dbReference type="PROSITE" id="PS51723">
    <property type="entry name" value="PEPTIDASE_M60"/>
    <property type="match status" value="1"/>
</dbReference>
<evidence type="ECO:0000255" key="1"/>
<evidence type="ECO:0000255" key="2">
    <source>
        <dbReference type="PROSITE-ProRule" id="PRU00498"/>
    </source>
</evidence>
<evidence type="ECO:0000255" key="3">
    <source>
        <dbReference type="PROSITE-ProRule" id="PRU01060"/>
    </source>
</evidence>
<evidence type="ECO:0000255" key="4">
    <source>
        <dbReference type="PROSITE-ProRule" id="PRU01164"/>
    </source>
</evidence>
<evidence type="ECO:0000305" key="5"/>
<evidence type="ECO:0000312" key="6">
    <source>
        <dbReference type="EMBL" id="EAL49122.1"/>
    </source>
</evidence>
<sequence length="1113" mass="125427">MLGSKSIIAVVAIASAIVTGVVVIVVVVTLSVVLTRSSVKDTNSIYVPDVITNDPQMTNEMDTLEVISSSKFSGTKPKEWTMKYTKYPYWRCGLTFTNEEKQNIVNENKEYMNSLLQLINNGSLGRMPEKYGGDKQFEANGVNWEADRLEVRYGLFGRVFGQRAVAWAFPGEIVTIKFPKGMSYKGIQVGIGKCNHNPSDQWLNVNNWSNDRMPIDSIGFDLGLNTTQPYIINDTFKIGSPFGGMIYLRSDTTFTNSFYVTFSNVGRAPIINYNITTNEEWNSVLRNAPGNVAEIRTPGNRLVLTSRNIRSLEDAQYISDFWLKAISISNYAVTLENIPITLNFDQRVDAGAAVAYVGRWFTQNPSDWAAACVGKDGLINYGNWGPLHEMNHHMQGTYLKGGNWGISNPGEETNNVMTSINYILYTNIAGHRNQGLSGWNYVSDGYSTIYKILKGENDQPHLRSYVNMAHAFGTDTLIALVKSYYGLWYENNFESKYSIKRDSTSAFCLLAALVTKRDTRYLCSLFKYDIQSNVSEAIKNMNYPTYYPFFNLYAMSYNGNYYGRPYKIPYGRTRLNFTATTAIDPKATSVSYTIKSGLTKGKLERVEDNVYDYTPFFGIEENDTFVLNIDCVVNGEKVHIEQEGTFELDPHQVEYEVYKDVQTRDMAQALNIIQNKTANDTGRASFFGIGTYNDGSMQSMLVEKGKLIVPKSGYYTLFMKADDLGRLLLNITGEYEQLLDVKTYLGGYSKTLNGSYATVKLEKDVGYPFILYNLNTGGQGFIRIGYCYHGTEESSVDVSKCSVSDIGSSMVLNEKVKTGAKEPEFQIPPIKYSRPTRFLTNAYRTIPKCLNGDDACSIKCLSLPLKHDDSSKCSNMFDDNYSTMYHSRWTGQGTTFPVNYTFEFSENVTFNNLYVHHRRPEDSWGYFEMFVKSPETGEMELLEKYKHPKSTTTELNFQKLVTTDRVQFIVYNNSNGGNYVNVVELSFNIKETFKNYTNSFGPKIKSTGFKKVTTPGASGGYLAVNEKEGEGSLCFKAKVTKFGLYGYRKTTSGKFRVTIDSQPGEVTSQSYFSDSERTLFYAHTFDETEANKVHNICMEVVEGTVNLDIIGSS</sequence>